<reference key="1">
    <citation type="journal article" date="2006" name="PLoS Genet.">
        <title>Comparative genomics of emerging human ehrlichiosis agents.</title>
        <authorList>
            <person name="Dunning Hotopp J.C."/>
            <person name="Lin M."/>
            <person name="Madupu R."/>
            <person name="Crabtree J."/>
            <person name="Angiuoli S.V."/>
            <person name="Eisen J.A."/>
            <person name="Seshadri R."/>
            <person name="Ren Q."/>
            <person name="Wu M."/>
            <person name="Utterback T.R."/>
            <person name="Smith S."/>
            <person name="Lewis M."/>
            <person name="Khouri H."/>
            <person name="Zhang C."/>
            <person name="Niu H."/>
            <person name="Lin Q."/>
            <person name="Ohashi N."/>
            <person name="Zhi N."/>
            <person name="Nelson W.C."/>
            <person name="Brinkac L.M."/>
            <person name="Dodson R.J."/>
            <person name="Rosovitz M.J."/>
            <person name="Sundaram J.P."/>
            <person name="Daugherty S.C."/>
            <person name="Davidsen T."/>
            <person name="Durkin A.S."/>
            <person name="Gwinn M.L."/>
            <person name="Haft D.H."/>
            <person name="Selengut J.D."/>
            <person name="Sullivan S.A."/>
            <person name="Zafar N."/>
            <person name="Zhou L."/>
            <person name="Benahmed F."/>
            <person name="Forberger H."/>
            <person name="Halpin R."/>
            <person name="Mulligan S."/>
            <person name="Robinson J."/>
            <person name="White O."/>
            <person name="Rikihisa Y."/>
            <person name="Tettelin H."/>
        </authorList>
    </citation>
    <scope>NUCLEOTIDE SEQUENCE [LARGE SCALE GENOMIC DNA]</scope>
    <source>
        <strain>HZ</strain>
    </source>
</reference>
<accession>Q2GL35</accession>
<name>RL17_ANAPZ</name>
<keyword id="KW-0687">Ribonucleoprotein</keyword>
<keyword id="KW-0689">Ribosomal protein</keyword>
<organism>
    <name type="scientific">Anaplasma phagocytophilum (strain HZ)</name>
    <dbReference type="NCBI Taxonomy" id="212042"/>
    <lineage>
        <taxon>Bacteria</taxon>
        <taxon>Pseudomonadati</taxon>
        <taxon>Pseudomonadota</taxon>
        <taxon>Alphaproteobacteria</taxon>
        <taxon>Rickettsiales</taxon>
        <taxon>Anaplasmataceae</taxon>
        <taxon>Anaplasma</taxon>
        <taxon>phagocytophilum group</taxon>
    </lineage>
</organism>
<proteinExistence type="inferred from homology"/>
<gene>
    <name evidence="1" type="primary">rplQ</name>
    <name type="ordered locus">APH_0304</name>
</gene>
<protein>
    <recommendedName>
        <fullName evidence="1">Large ribosomal subunit protein bL17</fullName>
    </recommendedName>
    <alternativeName>
        <fullName evidence="2">50S ribosomal protein L17</fullName>
    </alternativeName>
</protein>
<feature type="chain" id="PRO_1000055764" description="Large ribosomal subunit protein bL17">
    <location>
        <begin position="1"/>
        <end position="132"/>
    </location>
</feature>
<sequence length="132" mass="14779">MRHGVSYRKFSRPTAHRMAMMMNLAVSLVTSERIVTTLPKAKDLRSVVEGLITIAKRYSQKDPVCGRRLLLSRTSGNSSVTNKLLGVLAQRYKNRNGGYTRIMKNGFRKGDCAPIAIIELVDREKDLKVIGS</sequence>
<evidence type="ECO:0000255" key="1">
    <source>
        <dbReference type="HAMAP-Rule" id="MF_01368"/>
    </source>
</evidence>
<evidence type="ECO:0000305" key="2"/>
<dbReference type="EMBL" id="CP000235">
    <property type="protein sequence ID" value="ABD43225.1"/>
    <property type="molecule type" value="Genomic_DNA"/>
</dbReference>
<dbReference type="RefSeq" id="WP_011450439.1">
    <property type="nucleotide sequence ID" value="NC_007797.1"/>
</dbReference>
<dbReference type="SMR" id="Q2GL35"/>
<dbReference type="STRING" id="212042.APH_0304"/>
<dbReference type="PaxDb" id="212042-APH_0304"/>
<dbReference type="EnsemblBacteria" id="ABD43225">
    <property type="protein sequence ID" value="ABD43225"/>
    <property type="gene ID" value="APH_0304"/>
</dbReference>
<dbReference type="GeneID" id="92747499"/>
<dbReference type="KEGG" id="aph:APH_0304"/>
<dbReference type="eggNOG" id="COG0203">
    <property type="taxonomic scope" value="Bacteria"/>
</dbReference>
<dbReference type="HOGENOM" id="CLU_074407_2_0_5"/>
<dbReference type="Proteomes" id="UP000001943">
    <property type="component" value="Chromosome"/>
</dbReference>
<dbReference type="GO" id="GO:0022625">
    <property type="term" value="C:cytosolic large ribosomal subunit"/>
    <property type="evidence" value="ECO:0007669"/>
    <property type="project" value="TreeGrafter"/>
</dbReference>
<dbReference type="GO" id="GO:0003735">
    <property type="term" value="F:structural constituent of ribosome"/>
    <property type="evidence" value="ECO:0007669"/>
    <property type="project" value="InterPro"/>
</dbReference>
<dbReference type="GO" id="GO:0006412">
    <property type="term" value="P:translation"/>
    <property type="evidence" value="ECO:0007669"/>
    <property type="project" value="UniProtKB-UniRule"/>
</dbReference>
<dbReference type="Gene3D" id="3.90.1030.10">
    <property type="entry name" value="Ribosomal protein L17"/>
    <property type="match status" value="1"/>
</dbReference>
<dbReference type="HAMAP" id="MF_01368">
    <property type="entry name" value="Ribosomal_bL17"/>
    <property type="match status" value="1"/>
</dbReference>
<dbReference type="InterPro" id="IPR000456">
    <property type="entry name" value="Ribosomal_bL17"/>
</dbReference>
<dbReference type="InterPro" id="IPR047859">
    <property type="entry name" value="Ribosomal_bL17_CS"/>
</dbReference>
<dbReference type="InterPro" id="IPR036373">
    <property type="entry name" value="Ribosomal_bL17_sf"/>
</dbReference>
<dbReference type="NCBIfam" id="TIGR00059">
    <property type="entry name" value="L17"/>
    <property type="match status" value="1"/>
</dbReference>
<dbReference type="PANTHER" id="PTHR14413:SF16">
    <property type="entry name" value="LARGE RIBOSOMAL SUBUNIT PROTEIN BL17M"/>
    <property type="match status" value="1"/>
</dbReference>
<dbReference type="PANTHER" id="PTHR14413">
    <property type="entry name" value="RIBOSOMAL PROTEIN L17"/>
    <property type="match status" value="1"/>
</dbReference>
<dbReference type="Pfam" id="PF01196">
    <property type="entry name" value="Ribosomal_L17"/>
    <property type="match status" value="1"/>
</dbReference>
<dbReference type="SUPFAM" id="SSF64263">
    <property type="entry name" value="Prokaryotic ribosomal protein L17"/>
    <property type="match status" value="1"/>
</dbReference>
<dbReference type="PROSITE" id="PS01167">
    <property type="entry name" value="RIBOSOMAL_L17"/>
    <property type="match status" value="1"/>
</dbReference>
<comment type="subunit">
    <text evidence="1">Part of the 50S ribosomal subunit. Contacts protein L32.</text>
</comment>
<comment type="similarity">
    <text evidence="1">Belongs to the bacterial ribosomal protein bL17 family.</text>
</comment>